<sequence>MSLFLFAIFQLALGSPGAPNGPNVPLQLTGVRRGLDHVQKLPSEAFSFKLFGKNLAEDGYYFTTATRCEDSHLSTVSTVRATVKESYCSYAILSVPEGLPFNVSTSVYHLCHKNATIYTQKFLVVHEKKAAAAKYMGDEIVFCFFCILMSAYASGMTLGYMKFSMIDLNTMLKIAEGDAAKKRVRRIMHFRRRSTQLVVTFSLFSSVFTVLFTTTCEKMLHGVSNEDVLKMAVPALICLIFAEMIPQAVCNSKFGFNLAASLWFVTVIIFFVTLPIAYPASLVLGRFLKRDVREVMTPEEKTCLLRSMAQNEREKTILENATTFTLKKVGQLMVPIEEVFMLSRSQKLNRSTVLTLVEKGYTRIPVYDNKNRSVIVGMLNMKNFNLLMVKTNLIDEPTVKEALHALELLKDRTVKFAVKYVNIEMNAHLLLNRMKTGDFHFACVVEYSAYDSKVVGIITIEDILEKLIGKIDEINELRVRSSIDDRGDNAVIGWCREAGSDKKYPLPFSQQLRILQHLLSECQVLKSLDIGIMKAKQILSLDRIRVGKKNDKLELHDLLLVIFEGTVLVTNEVETFERVIDVPSQRSSSTVNSQQHRQQTTDNSRSTPVPVLIIGKPLLNRLMKSLGSPFSEPLGPKDNVSELVVVSEEASYFKLRLEDLMNSINGCRKVDRNGHTTTGESLLQTLNSRASTSTSTTPACRTPLSVDARSQDETTPFMEKQE</sequence>
<protein>
    <recommendedName>
        <fullName evidence="7">Metal transporter cnnm-5</fullName>
    </recommendedName>
    <alternativeName>
        <fullName evidence="10">CNNM family homolog 5</fullName>
    </alternativeName>
</protein>
<proteinExistence type="inferred from homology"/>
<feature type="signal peptide" evidence="1">
    <location>
        <begin position="1"/>
        <end position="17"/>
    </location>
</feature>
<feature type="chain" id="PRO_0000438477" description="Metal transporter cnnm-5">
    <location>
        <begin position="18"/>
        <end position="722"/>
    </location>
</feature>
<feature type="topological domain" description="Extracellular" evidence="7">
    <location>
        <begin position="18"/>
        <end position="139"/>
    </location>
</feature>
<feature type="transmembrane region" description="Helical" evidence="1">
    <location>
        <begin position="140"/>
        <end position="160"/>
    </location>
</feature>
<feature type="topological domain" description="Cytoplasmic" evidence="7">
    <location>
        <begin position="161"/>
        <end position="196"/>
    </location>
</feature>
<feature type="transmembrane region" description="Helical" evidence="1">
    <location>
        <begin position="197"/>
        <end position="217"/>
    </location>
</feature>
<feature type="topological domain" description="Extracellular" evidence="7">
    <location>
        <begin position="218"/>
        <end position="227"/>
    </location>
</feature>
<feature type="transmembrane region" description="Helical" evidence="1">
    <location>
        <begin position="228"/>
        <end position="248"/>
    </location>
</feature>
<feature type="topological domain" description="Cytoplasmic" evidence="7">
    <location>
        <begin position="249"/>
        <end position="257"/>
    </location>
</feature>
<feature type="transmembrane region" description="Helical" evidence="1">
    <location>
        <begin position="258"/>
        <end position="278"/>
    </location>
</feature>
<feature type="topological domain" description="Extracellular" evidence="7">
    <location>
        <begin position="279"/>
        <end position="722"/>
    </location>
</feature>
<feature type="domain" description="CNNM transmembrane" evidence="4">
    <location>
        <begin position="132"/>
        <end position="318"/>
    </location>
</feature>
<feature type="domain" description="CBS 1" evidence="3">
    <location>
        <begin position="333"/>
        <end position="396"/>
    </location>
</feature>
<feature type="domain" description="CBS 2" evidence="3">
    <location>
        <begin position="413"/>
        <end position="473"/>
    </location>
</feature>
<feature type="region of interest" description="Disordered" evidence="5">
    <location>
        <begin position="584"/>
        <end position="607"/>
    </location>
</feature>
<feature type="region of interest" description="Disordered" evidence="5">
    <location>
        <begin position="686"/>
        <end position="722"/>
    </location>
</feature>
<feature type="compositionally biased region" description="Low complexity" evidence="5">
    <location>
        <begin position="688"/>
        <end position="703"/>
    </location>
</feature>
<feature type="glycosylation site" description="N-linked (GlcNAc...) asparagine" evidence="2">
    <location>
        <position position="102"/>
    </location>
</feature>
<feature type="glycosylation site" description="N-linked (GlcNAc...) asparagine" evidence="2">
    <location>
        <position position="114"/>
    </location>
</feature>
<feature type="glycosylation site" description="N-linked (GlcNAc...) asparagine" evidence="2">
    <location>
        <position position="320"/>
    </location>
</feature>
<feature type="glycosylation site" description="N-linked (GlcNAc...) asparagine" evidence="2">
    <location>
        <position position="349"/>
    </location>
</feature>
<feature type="glycosylation site" description="N-linked (GlcNAc...) asparagine" evidence="2">
    <location>
        <position position="371"/>
    </location>
</feature>
<feature type="glycosylation site" description="N-linked (GlcNAc...) asparagine" evidence="2">
    <location>
        <position position="639"/>
    </location>
</feature>
<accession>G5ED05</accession>
<name>CNNM5_CAEEL</name>
<comment type="function">
    <text evidence="8">Probable metal transporter. Probably acts redundantly with the other metal transport proteins cnnm-1, cnnm-2, cnnm-3 and cnnm-4 to regulate Mg(2+) homeostasis.</text>
</comment>
<comment type="subcellular location">
    <subcellularLocation>
        <location evidence="7">Cell membrane</location>
        <topology evidence="1">Multi-pass membrane protein</topology>
    </subcellularLocation>
</comment>
<comment type="disruption phenotype">
    <text evidence="6">No visible phenotype. Quintuple knockout with cnnm-1, cnnm-2, cnnm-3 and cnnm-4 results in a reduced lifespan and 100% sterility.</text>
</comment>
<comment type="similarity">
    <text evidence="7">Belongs to the ACDP family.</text>
</comment>
<organism evidence="9">
    <name type="scientific">Caenorhabditis elegans</name>
    <dbReference type="NCBI Taxonomy" id="6239"/>
    <lineage>
        <taxon>Eukaryota</taxon>
        <taxon>Metazoa</taxon>
        <taxon>Ecdysozoa</taxon>
        <taxon>Nematoda</taxon>
        <taxon>Chromadorea</taxon>
        <taxon>Rhabditida</taxon>
        <taxon>Rhabditina</taxon>
        <taxon>Rhabditomorpha</taxon>
        <taxon>Rhabditoidea</taxon>
        <taxon>Rhabditidae</taxon>
        <taxon>Peloderinae</taxon>
        <taxon>Caenorhabditis</taxon>
    </lineage>
</organism>
<keyword id="KW-0129">CBS domain</keyword>
<keyword id="KW-1003">Cell membrane</keyword>
<keyword id="KW-0325">Glycoprotein</keyword>
<keyword id="KW-0406">Ion transport</keyword>
<keyword id="KW-0472">Membrane</keyword>
<keyword id="KW-1185">Reference proteome</keyword>
<keyword id="KW-0677">Repeat</keyword>
<keyword id="KW-0732">Signal</keyword>
<keyword id="KW-0812">Transmembrane</keyword>
<keyword id="KW-1133">Transmembrane helix</keyword>
<keyword id="KW-0813">Transport</keyword>
<reference evidence="9" key="1">
    <citation type="journal article" date="1998" name="Science">
        <title>Genome sequence of the nematode C. elegans: a platform for investigating biology.</title>
        <authorList>
            <consortium name="The C. elegans sequencing consortium"/>
        </authorList>
    </citation>
    <scope>NUCLEOTIDE SEQUENCE [LARGE SCALE GENOMIC DNA]</scope>
    <source>
        <strain evidence="9">Bristol N2</strain>
    </source>
</reference>
<reference evidence="7" key="2">
    <citation type="journal article" date="2016" name="PLoS Genet.">
        <title>Mg2+ extrusion from intestinal epithelia by CNNM proteins is essential for gonadogenesis via AMPK-TORC1 signaling in Caenorhabditis elegans.</title>
        <authorList>
            <person name="Ishii T."/>
            <person name="Funato Y."/>
            <person name="Hashizume O."/>
            <person name="Yamazaki D."/>
            <person name="Hirata Y."/>
            <person name="Nishiwaki K."/>
            <person name="Kono N."/>
            <person name="Arai H."/>
            <person name="Miki H."/>
        </authorList>
    </citation>
    <scope>FUNCTION</scope>
    <scope>DISRUPTION PHENOTYPE</scope>
</reference>
<evidence type="ECO:0000255" key="1"/>
<evidence type="ECO:0000255" key="2">
    <source>
        <dbReference type="PROSITE-ProRule" id="PRU00498"/>
    </source>
</evidence>
<evidence type="ECO:0000255" key="3">
    <source>
        <dbReference type="PROSITE-ProRule" id="PRU00703"/>
    </source>
</evidence>
<evidence type="ECO:0000255" key="4">
    <source>
        <dbReference type="PROSITE-ProRule" id="PRU01193"/>
    </source>
</evidence>
<evidence type="ECO:0000256" key="5">
    <source>
        <dbReference type="SAM" id="MobiDB-lite"/>
    </source>
</evidence>
<evidence type="ECO:0000269" key="6">
    <source>
    </source>
</evidence>
<evidence type="ECO:0000305" key="7"/>
<evidence type="ECO:0000305" key="8">
    <source>
    </source>
</evidence>
<evidence type="ECO:0000312" key="9">
    <source>
        <dbReference type="Proteomes" id="UP000001940"/>
    </source>
</evidence>
<evidence type="ECO:0000312" key="10">
    <source>
        <dbReference type="WormBase" id="R13G10.4"/>
    </source>
</evidence>
<dbReference type="EMBL" id="BX284603">
    <property type="protein sequence ID" value="CAA84672.1"/>
    <property type="molecule type" value="Genomic_DNA"/>
</dbReference>
<dbReference type="PIR" id="T19772">
    <property type="entry name" value="T19772"/>
</dbReference>
<dbReference type="RefSeq" id="NP_497773.1">
    <property type="nucleotide sequence ID" value="NM_065372.2"/>
</dbReference>
<dbReference type="SMR" id="G5ED05"/>
<dbReference type="FunCoup" id="G5ED05">
    <property type="interactions" value="18"/>
</dbReference>
<dbReference type="STRING" id="6239.R13G10.4.1"/>
<dbReference type="GlyCosmos" id="G5ED05">
    <property type="glycosylation" value="6 sites, No reported glycans"/>
</dbReference>
<dbReference type="PaxDb" id="6239-R13G10.4"/>
<dbReference type="EnsemblMetazoa" id="R13G10.4.1">
    <property type="protein sequence ID" value="R13G10.4.1"/>
    <property type="gene ID" value="WBGene00011260"/>
</dbReference>
<dbReference type="GeneID" id="187872"/>
<dbReference type="KEGG" id="cel:CELE_R13G10.4"/>
<dbReference type="AGR" id="WB:WBGene00011260"/>
<dbReference type="CTD" id="187872"/>
<dbReference type="WormBase" id="R13G10.4">
    <property type="protein sequence ID" value="CE03570"/>
    <property type="gene ID" value="WBGene00011260"/>
    <property type="gene designation" value="cnnm-5"/>
</dbReference>
<dbReference type="eggNOG" id="KOG2118">
    <property type="taxonomic scope" value="Eukaryota"/>
</dbReference>
<dbReference type="GeneTree" id="ENSGT00940000171934"/>
<dbReference type="HOGENOM" id="CLU_024276_0_0_1"/>
<dbReference type="InParanoid" id="G5ED05"/>
<dbReference type="OMA" id="NAVIGWC"/>
<dbReference type="OrthoDB" id="5353557at2759"/>
<dbReference type="PhylomeDB" id="G5ED05"/>
<dbReference type="PRO" id="PR:G5ED05"/>
<dbReference type="Proteomes" id="UP000001940">
    <property type="component" value="Chromosome III"/>
</dbReference>
<dbReference type="Bgee" id="WBGene00011260">
    <property type="expression patterns" value="Expressed in pharyngeal muscle cell (C elegans) and 3 other cell types or tissues"/>
</dbReference>
<dbReference type="GO" id="GO:0005886">
    <property type="term" value="C:plasma membrane"/>
    <property type="evidence" value="ECO:0007669"/>
    <property type="project" value="UniProtKB-SubCell"/>
</dbReference>
<dbReference type="GO" id="GO:0022857">
    <property type="term" value="F:transmembrane transporter activity"/>
    <property type="evidence" value="ECO:0000318"/>
    <property type="project" value="GO_Central"/>
</dbReference>
<dbReference type="GO" id="GO:0008340">
    <property type="term" value="P:determination of adult lifespan"/>
    <property type="evidence" value="ECO:0000316"/>
    <property type="project" value="UniProtKB"/>
</dbReference>
<dbReference type="GO" id="GO:0010960">
    <property type="term" value="P:magnesium ion homeostasis"/>
    <property type="evidence" value="ECO:0007669"/>
    <property type="project" value="InterPro"/>
</dbReference>
<dbReference type="GO" id="GO:0006811">
    <property type="term" value="P:monoatomic ion transport"/>
    <property type="evidence" value="ECO:0007669"/>
    <property type="project" value="UniProtKB-KW"/>
</dbReference>
<dbReference type="GO" id="GO:1905941">
    <property type="term" value="P:positive regulation of gonad development"/>
    <property type="evidence" value="ECO:0000316"/>
    <property type="project" value="UniProtKB"/>
</dbReference>
<dbReference type="CDD" id="cd04590">
    <property type="entry name" value="CBS_pair_CorC_HlyC_assoc"/>
    <property type="match status" value="1"/>
</dbReference>
<dbReference type="FunFam" id="3.10.580.10:FF:000151">
    <property type="entry name" value="Metal transporter cnnm-5"/>
    <property type="match status" value="1"/>
</dbReference>
<dbReference type="Gene3D" id="3.10.580.10">
    <property type="entry name" value="CBS-domain"/>
    <property type="match status" value="1"/>
</dbReference>
<dbReference type="InterPro" id="IPR045095">
    <property type="entry name" value="ACDP"/>
</dbReference>
<dbReference type="InterPro" id="IPR000644">
    <property type="entry name" value="CBS_dom"/>
</dbReference>
<dbReference type="InterPro" id="IPR046342">
    <property type="entry name" value="CBS_dom_sf"/>
</dbReference>
<dbReference type="InterPro" id="IPR002550">
    <property type="entry name" value="CNNM"/>
</dbReference>
<dbReference type="InterPro" id="IPR044751">
    <property type="entry name" value="Ion_transp-like_CBS"/>
</dbReference>
<dbReference type="PANTHER" id="PTHR12064">
    <property type="entry name" value="METAL TRANSPORTER CNNM"/>
    <property type="match status" value="1"/>
</dbReference>
<dbReference type="PANTHER" id="PTHR12064:SF97">
    <property type="entry name" value="METAL TRANSPORTER CNNM-5"/>
    <property type="match status" value="1"/>
</dbReference>
<dbReference type="Pfam" id="PF00571">
    <property type="entry name" value="CBS"/>
    <property type="match status" value="1"/>
</dbReference>
<dbReference type="Pfam" id="PF01595">
    <property type="entry name" value="CNNM"/>
    <property type="match status" value="1"/>
</dbReference>
<dbReference type="SUPFAM" id="SSF54631">
    <property type="entry name" value="CBS-domain pair"/>
    <property type="match status" value="1"/>
</dbReference>
<dbReference type="PROSITE" id="PS51371">
    <property type="entry name" value="CBS"/>
    <property type="match status" value="2"/>
</dbReference>
<dbReference type="PROSITE" id="PS51846">
    <property type="entry name" value="CNNM"/>
    <property type="match status" value="1"/>
</dbReference>
<gene>
    <name evidence="10" type="primary">cnnm-5</name>
    <name evidence="10" type="ORF">R13G10.4</name>
</gene>